<accession>A8LS92</accession>
<gene>
    <name evidence="1" type="primary">murD</name>
    <name type="ordered locus">Dshi_2451</name>
</gene>
<reference key="1">
    <citation type="journal article" date="2010" name="ISME J.">
        <title>The complete genome sequence of the algal symbiont Dinoroseobacter shibae: a hitchhiker's guide to life in the sea.</title>
        <authorList>
            <person name="Wagner-Dobler I."/>
            <person name="Ballhausen B."/>
            <person name="Berger M."/>
            <person name="Brinkhoff T."/>
            <person name="Buchholz I."/>
            <person name="Bunk B."/>
            <person name="Cypionka H."/>
            <person name="Daniel R."/>
            <person name="Drepper T."/>
            <person name="Gerdts G."/>
            <person name="Hahnke S."/>
            <person name="Han C."/>
            <person name="Jahn D."/>
            <person name="Kalhoefer D."/>
            <person name="Kiss H."/>
            <person name="Klenk H.P."/>
            <person name="Kyrpides N."/>
            <person name="Liebl W."/>
            <person name="Liesegang H."/>
            <person name="Meincke L."/>
            <person name="Pati A."/>
            <person name="Petersen J."/>
            <person name="Piekarski T."/>
            <person name="Pommerenke C."/>
            <person name="Pradella S."/>
            <person name="Pukall R."/>
            <person name="Rabus R."/>
            <person name="Stackebrandt E."/>
            <person name="Thole S."/>
            <person name="Thompson L."/>
            <person name="Tielen P."/>
            <person name="Tomasch J."/>
            <person name="von Jan M."/>
            <person name="Wanphrut N."/>
            <person name="Wichels A."/>
            <person name="Zech H."/>
            <person name="Simon M."/>
        </authorList>
    </citation>
    <scope>NUCLEOTIDE SEQUENCE [LARGE SCALE GENOMIC DNA]</scope>
    <source>
        <strain>DSM 16493 / NCIMB 14021 / DFL 12</strain>
    </source>
</reference>
<sequence>MIPVRGFSGETIAVLGLGRSGLATARALRAGGATPLCWDDNTEARARAEAEGFACAPLKHADAFDGVAALITSPGIPHLYPTPNPTIALAMSLGIPVDNDIGLFFRSFATPDWDEFDSLPRVIAVTGSNGKSTTSALIHHVLTAAGRPTQLAGNIGRGVLDIDPGEDGGIVVLELSSYQTELARALTPDIAVFTNLSPDHLDRHGGMGGYFAAKRRLFTIGGPDRAVIGTDEPEGLFLASQLSVAPADDRVIRVTSAKPSGPGWVVSARKGFLAEHRKGRQTGSIDLRPIPGLPGAHNHQNAACAYAACRSLGLAPRQIEAGFASFKGLPHRSQIVGTANGVTFVNDSKATNVDSAAKALQAFDRIRWIAGGLEKEGGLAALTPHLGGVRKAYLIGRSAAEFALGIPDTPHEVCETMARAVAAAVAEAEPGDTILLAPAAASFDQYDNFERRGEDFIAEVAKYL</sequence>
<dbReference type="EC" id="6.3.2.9" evidence="1"/>
<dbReference type="EMBL" id="CP000830">
    <property type="protein sequence ID" value="ABV94185.1"/>
    <property type="molecule type" value="Genomic_DNA"/>
</dbReference>
<dbReference type="RefSeq" id="WP_012179116.1">
    <property type="nucleotide sequence ID" value="NC_009952.1"/>
</dbReference>
<dbReference type="SMR" id="A8LS92"/>
<dbReference type="STRING" id="398580.Dshi_2451"/>
<dbReference type="KEGG" id="dsh:Dshi_2451"/>
<dbReference type="eggNOG" id="COG0771">
    <property type="taxonomic scope" value="Bacteria"/>
</dbReference>
<dbReference type="HOGENOM" id="CLU_032540_3_0_5"/>
<dbReference type="OrthoDB" id="9809796at2"/>
<dbReference type="UniPathway" id="UPA00219"/>
<dbReference type="Proteomes" id="UP000006833">
    <property type="component" value="Chromosome"/>
</dbReference>
<dbReference type="GO" id="GO:0005737">
    <property type="term" value="C:cytoplasm"/>
    <property type="evidence" value="ECO:0007669"/>
    <property type="project" value="UniProtKB-SubCell"/>
</dbReference>
<dbReference type="GO" id="GO:0005524">
    <property type="term" value="F:ATP binding"/>
    <property type="evidence" value="ECO:0007669"/>
    <property type="project" value="UniProtKB-UniRule"/>
</dbReference>
<dbReference type="GO" id="GO:0008764">
    <property type="term" value="F:UDP-N-acetylmuramoylalanine-D-glutamate ligase activity"/>
    <property type="evidence" value="ECO:0007669"/>
    <property type="project" value="UniProtKB-UniRule"/>
</dbReference>
<dbReference type="GO" id="GO:0051301">
    <property type="term" value="P:cell division"/>
    <property type="evidence" value="ECO:0007669"/>
    <property type="project" value="UniProtKB-KW"/>
</dbReference>
<dbReference type="GO" id="GO:0071555">
    <property type="term" value="P:cell wall organization"/>
    <property type="evidence" value="ECO:0007669"/>
    <property type="project" value="UniProtKB-KW"/>
</dbReference>
<dbReference type="GO" id="GO:0009252">
    <property type="term" value="P:peptidoglycan biosynthetic process"/>
    <property type="evidence" value="ECO:0007669"/>
    <property type="project" value="UniProtKB-UniRule"/>
</dbReference>
<dbReference type="GO" id="GO:0008360">
    <property type="term" value="P:regulation of cell shape"/>
    <property type="evidence" value="ECO:0007669"/>
    <property type="project" value="UniProtKB-KW"/>
</dbReference>
<dbReference type="Gene3D" id="3.90.190.20">
    <property type="entry name" value="Mur ligase, C-terminal domain"/>
    <property type="match status" value="1"/>
</dbReference>
<dbReference type="Gene3D" id="3.40.1190.10">
    <property type="entry name" value="Mur-like, catalytic domain"/>
    <property type="match status" value="1"/>
</dbReference>
<dbReference type="Gene3D" id="3.40.50.720">
    <property type="entry name" value="NAD(P)-binding Rossmann-like Domain"/>
    <property type="match status" value="1"/>
</dbReference>
<dbReference type="HAMAP" id="MF_00639">
    <property type="entry name" value="MurD"/>
    <property type="match status" value="1"/>
</dbReference>
<dbReference type="InterPro" id="IPR036565">
    <property type="entry name" value="Mur-like_cat_sf"/>
</dbReference>
<dbReference type="InterPro" id="IPR004101">
    <property type="entry name" value="Mur_ligase_C"/>
</dbReference>
<dbReference type="InterPro" id="IPR036615">
    <property type="entry name" value="Mur_ligase_C_dom_sf"/>
</dbReference>
<dbReference type="InterPro" id="IPR013221">
    <property type="entry name" value="Mur_ligase_cen"/>
</dbReference>
<dbReference type="InterPro" id="IPR005762">
    <property type="entry name" value="MurD"/>
</dbReference>
<dbReference type="NCBIfam" id="TIGR01087">
    <property type="entry name" value="murD"/>
    <property type="match status" value="1"/>
</dbReference>
<dbReference type="PANTHER" id="PTHR43692">
    <property type="entry name" value="UDP-N-ACETYLMURAMOYLALANINE--D-GLUTAMATE LIGASE"/>
    <property type="match status" value="1"/>
</dbReference>
<dbReference type="PANTHER" id="PTHR43692:SF1">
    <property type="entry name" value="UDP-N-ACETYLMURAMOYLALANINE--D-GLUTAMATE LIGASE"/>
    <property type="match status" value="1"/>
</dbReference>
<dbReference type="Pfam" id="PF02875">
    <property type="entry name" value="Mur_ligase_C"/>
    <property type="match status" value="1"/>
</dbReference>
<dbReference type="Pfam" id="PF08245">
    <property type="entry name" value="Mur_ligase_M"/>
    <property type="match status" value="1"/>
</dbReference>
<dbReference type="SUPFAM" id="SSF51984">
    <property type="entry name" value="MurCD N-terminal domain"/>
    <property type="match status" value="1"/>
</dbReference>
<dbReference type="SUPFAM" id="SSF53623">
    <property type="entry name" value="MurD-like peptide ligases, catalytic domain"/>
    <property type="match status" value="1"/>
</dbReference>
<dbReference type="SUPFAM" id="SSF53244">
    <property type="entry name" value="MurD-like peptide ligases, peptide-binding domain"/>
    <property type="match status" value="1"/>
</dbReference>
<protein>
    <recommendedName>
        <fullName evidence="1">UDP-N-acetylmuramoylalanine--D-glutamate ligase</fullName>
        <ecNumber evidence="1">6.3.2.9</ecNumber>
    </recommendedName>
    <alternativeName>
        <fullName evidence="1">D-glutamic acid-adding enzyme</fullName>
    </alternativeName>
    <alternativeName>
        <fullName evidence="1">UDP-N-acetylmuramoyl-L-alanyl-D-glutamate synthetase</fullName>
    </alternativeName>
</protein>
<feature type="chain" id="PRO_1000082684" description="UDP-N-acetylmuramoylalanine--D-glutamate ligase">
    <location>
        <begin position="1"/>
        <end position="464"/>
    </location>
</feature>
<feature type="binding site" evidence="1">
    <location>
        <begin position="127"/>
        <end position="133"/>
    </location>
    <ligand>
        <name>ATP</name>
        <dbReference type="ChEBI" id="CHEBI:30616"/>
    </ligand>
</feature>
<keyword id="KW-0067">ATP-binding</keyword>
<keyword id="KW-0131">Cell cycle</keyword>
<keyword id="KW-0132">Cell division</keyword>
<keyword id="KW-0133">Cell shape</keyword>
<keyword id="KW-0961">Cell wall biogenesis/degradation</keyword>
<keyword id="KW-0963">Cytoplasm</keyword>
<keyword id="KW-0436">Ligase</keyword>
<keyword id="KW-0547">Nucleotide-binding</keyword>
<keyword id="KW-0573">Peptidoglycan synthesis</keyword>
<keyword id="KW-1185">Reference proteome</keyword>
<evidence type="ECO:0000255" key="1">
    <source>
        <dbReference type="HAMAP-Rule" id="MF_00639"/>
    </source>
</evidence>
<proteinExistence type="inferred from homology"/>
<comment type="function">
    <text evidence="1">Cell wall formation. Catalyzes the addition of glutamate to the nucleotide precursor UDP-N-acetylmuramoyl-L-alanine (UMA).</text>
</comment>
<comment type="catalytic activity">
    <reaction evidence="1">
        <text>UDP-N-acetyl-alpha-D-muramoyl-L-alanine + D-glutamate + ATP = UDP-N-acetyl-alpha-D-muramoyl-L-alanyl-D-glutamate + ADP + phosphate + H(+)</text>
        <dbReference type="Rhea" id="RHEA:16429"/>
        <dbReference type="ChEBI" id="CHEBI:15378"/>
        <dbReference type="ChEBI" id="CHEBI:29986"/>
        <dbReference type="ChEBI" id="CHEBI:30616"/>
        <dbReference type="ChEBI" id="CHEBI:43474"/>
        <dbReference type="ChEBI" id="CHEBI:83898"/>
        <dbReference type="ChEBI" id="CHEBI:83900"/>
        <dbReference type="ChEBI" id="CHEBI:456216"/>
        <dbReference type="EC" id="6.3.2.9"/>
    </reaction>
</comment>
<comment type="pathway">
    <text evidence="1">Cell wall biogenesis; peptidoglycan biosynthesis.</text>
</comment>
<comment type="subcellular location">
    <subcellularLocation>
        <location evidence="1">Cytoplasm</location>
    </subcellularLocation>
</comment>
<comment type="similarity">
    <text evidence="1">Belongs to the MurCDEF family.</text>
</comment>
<organism>
    <name type="scientific">Dinoroseobacter shibae (strain DSM 16493 / NCIMB 14021 / DFL 12)</name>
    <dbReference type="NCBI Taxonomy" id="398580"/>
    <lineage>
        <taxon>Bacteria</taxon>
        <taxon>Pseudomonadati</taxon>
        <taxon>Pseudomonadota</taxon>
        <taxon>Alphaproteobacteria</taxon>
        <taxon>Rhodobacterales</taxon>
        <taxon>Roseobacteraceae</taxon>
        <taxon>Dinoroseobacter</taxon>
    </lineage>
</organism>
<name>MURD_DINSH</name>